<evidence type="ECO:0000255" key="1">
    <source>
        <dbReference type="HAMAP-Rule" id="MF_03038"/>
    </source>
</evidence>
<organism>
    <name type="scientific">Aspergillus fumigatus (strain ATCC MYA-4609 / CBS 101355 / FGSC A1100 / Af293)</name>
    <name type="common">Neosartorya fumigata</name>
    <dbReference type="NCBI Taxonomy" id="330879"/>
    <lineage>
        <taxon>Eukaryota</taxon>
        <taxon>Fungi</taxon>
        <taxon>Dikarya</taxon>
        <taxon>Ascomycota</taxon>
        <taxon>Pezizomycotina</taxon>
        <taxon>Eurotiomycetes</taxon>
        <taxon>Eurotiomycetidae</taxon>
        <taxon>Eurotiales</taxon>
        <taxon>Aspergillaceae</taxon>
        <taxon>Aspergillus</taxon>
        <taxon>Aspergillus subgen. Fumigati</taxon>
    </lineage>
</organism>
<sequence>MAPSVMEPVAAFDVPTKAAPNLVAPEPEHCPGPESEQAGKGDACAGCPNQAICASAPKGPDPDIPIITERLSQIRHKILVLSGKGGVGKSTFSSLLAHAFASNPESTVGLCDTDICGPSIPKMMGVESETIHVSNAGWSPVWVTDNLSVMSIQFMLPNRDDAIIWRGPKKNGMIKQFLKDVDWGDLDYLIVDTPPGTSDEHLSVNSLLKESGVDGAVIVTTPQEVSLLDVRKEIDFCRKAGIRILGLVENMRGFVCPGCSNTSEIFRATTGGGKRLAKKMGIPFLGSVPLDPRVGMACDYGESFVDNFPDSPASKAIKQVVRSVGEMLGEDPNTVLPPDENDMVE</sequence>
<proteinExistence type="inferred from homology"/>
<feature type="chain" id="PRO_0000278888" description="Cytosolic Fe-S cluster assembly factor nbp35">
    <location>
        <begin position="1"/>
        <end position="345"/>
    </location>
</feature>
<feature type="binding site" evidence="1">
    <location>
        <position position="30"/>
    </location>
    <ligand>
        <name>[4Fe-4S] cluster</name>
        <dbReference type="ChEBI" id="CHEBI:49883"/>
        <label>1</label>
    </ligand>
</feature>
<feature type="binding site" evidence="1">
    <location>
        <position position="44"/>
    </location>
    <ligand>
        <name>[4Fe-4S] cluster</name>
        <dbReference type="ChEBI" id="CHEBI:49883"/>
        <label>1</label>
    </ligand>
</feature>
<feature type="binding site" evidence="1">
    <location>
        <position position="47"/>
    </location>
    <ligand>
        <name>[4Fe-4S] cluster</name>
        <dbReference type="ChEBI" id="CHEBI:49883"/>
        <label>1</label>
    </ligand>
</feature>
<feature type="binding site" evidence="1">
    <location>
        <position position="53"/>
    </location>
    <ligand>
        <name>[4Fe-4S] cluster</name>
        <dbReference type="ChEBI" id="CHEBI:49883"/>
        <label>1</label>
    </ligand>
</feature>
<feature type="binding site" evidence="1">
    <location>
        <begin position="83"/>
        <end position="90"/>
    </location>
    <ligand>
        <name>ATP</name>
        <dbReference type="ChEBI" id="CHEBI:30616"/>
    </ligand>
</feature>
<feature type="binding site" evidence="1">
    <location>
        <position position="256"/>
    </location>
    <ligand>
        <name>[4Fe-4S] cluster</name>
        <dbReference type="ChEBI" id="CHEBI:49883"/>
        <label>2</label>
        <note>ligand shared with heterodimeric partner</note>
    </ligand>
</feature>
<feature type="binding site" evidence="1">
    <location>
        <position position="259"/>
    </location>
    <ligand>
        <name>[4Fe-4S] cluster</name>
        <dbReference type="ChEBI" id="CHEBI:49883"/>
        <label>2</label>
        <note>ligand shared with heterodimeric partner</note>
    </ligand>
</feature>
<name>NBP35_ASPFU</name>
<accession>Q4WZS2</accession>
<keyword id="KW-0004">4Fe-4S</keyword>
<keyword id="KW-0067">ATP-binding</keyword>
<keyword id="KW-0963">Cytoplasm</keyword>
<keyword id="KW-0408">Iron</keyword>
<keyword id="KW-0411">Iron-sulfur</keyword>
<keyword id="KW-0479">Metal-binding</keyword>
<keyword id="KW-0547">Nucleotide-binding</keyword>
<keyword id="KW-1185">Reference proteome</keyword>
<comment type="function">
    <text evidence="1">Component of the cytosolic iron-sulfur (Fe/S) protein assembly (CIA) machinery. Required for maturation of extramitochondrial Fe-S proteins. The nbp35-cfd1 heterotetramer forms a Fe-S scaffold complex, mediating the de novo assembly of an Fe-S cluster and its transfer to target apoproteins.</text>
</comment>
<comment type="cofactor">
    <cofactor evidence="1">
        <name>[4Fe-4S] cluster</name>
        <dbReference type="ChEBI" id="CHEBI:49883"/>
    </cofactor>
    <text evidence="1">Binds 4 [4Fe-4S] clusters per heterotetramer. Contains two stable clusters in the N-termini of nbp35 and two labile, bridging clusters between subunits of the nbp35-cfd1 heterotetramer.</text>
</comment>
<comment type="subunit">
    <text evidence="1">Heterotetramer of 2 nbp35 and 2 cfd1 chains.</text>
</comment>
<comment type="subcellular location">
    <subcellularLocation>
        <location evidence="1">Cytoplasm</location>
    </subcellularLocation>
</comment>
<comment type="similarity">
    <text evidence="1">Belongs to the Mrp/NBP35 ATP-binding proteins family. NUBP1/NBP35 subfamily.</text>
</comment>
<dbReference type="EMBL" id="AAHF01000001">
    <property type="protein sequence ID" value="EAL93893.1"/>
    <property type="molecule type" value="Genomic_DNA"/>
</dbReference>
<dbReference type="RefSeq" id="XP_755931.1">
    <property type="nucleotide sequence ID" value="XM_750838.1"/>
</dbReference>
<dbReference type="SMR" id="Q4WZS2"/>
<dbReference type="FunCoup" id="Q4WZS2">
    <property type="interactions" value="582"/>
</dbReference>
<dbReference type="STRING" id="330879.Q4WZS2"/>
<dbReference type="EnsemblFungi" id="EAL93893">
    <property type="protein sequence ID" value="EAL93893"/>
    <property type="gene ID" value="AFUA_2G15960"/>
</dbReference>
<dbReference type="GeneID" id="3513105"/>
<dbReference type="KEGG" id="afm:AFUA_2G15960"/>
<dbReference type="VEuPathDB" id="FungiDB:Afu2g15960"/>
<dbReference type="eggNOG" id="KOG3022">
    <property type="taxonomic scope" value="Eukaryota"/>
</dbReference>
<dbReference type="HOGENOM" id="CLU_024839_0_1_1"/>
<dbReference type="InParanoid" id="Q4WZS2"/>
<dbReference type="OMA" id="VSGCPMR"/>
<dbReference type="OrthoDB" id="1741334at2759"/>
<dbReference type="Proteomes" id="UP000002530">
    <property type="component" value="Chromosome 2"/>
</dbReference>
<dbReference type="GO" id="GO:0005829">
    <property type="term" value="C:cytosol"/>
    <property type="evidence" value="ECO:0000318"/>
    <property type="project" value="GO_Central"/>
</dbReference>
<dbReference type="GO" id="GO:0051539">
    <property type="term" value="F:4 iron, 4 sulfur cluster binding"/>
    <property type="evidence" value="ECO:0007669"/>
    <property type="project" value="UniProtKB-UniRule"/>
</dbReference>
<dbReference type="GO" id="GO:0005524">
    <property type="term" value="F:ATP binding"/>
    <property type="evidence" value="ECO:0007669"/>
    <property type="project" value="UniProtKB-KW"/>
</dbReference>
<dbReference type="GO" id="GO:0140663">
    <property type="term" value="F:ATP-dependent FeS chaperone activity"/>
    <property type="evidence" value="ECO:0007669"/>
    <property type="project" value="InterPro"/>
</dbReference>
<dbReference type="GO" id="GO:0051536">
    <property type="term" value="F:iron-sulfur cluster binding"/>
    <property type="evidence" value="ECO:0000318"/>
    <property type="project" value="GO_Central"/>
</dbReference>
<dbReference type="GO" id="GO:0046872">
    <property type="term" value="F:metal ion binding"/>
    <property type="evidence" value="ECO:0007669"/>
    <property type="project" value="UniProtKB-KW"/>
</dbReference>
<dbReference type="GO" id="GO:0016226">
    <property type="term" value="P:iron-sulfur cluster assembly"/>
    <property type="evidence" value="ECO:0000318"/>
    <property type="project" value="GO_Central"/>
</dbReference>
<dbReference type="CDD" id="cd02037">
    <property type="entry name" value="Mrp_NBP35"/>
    <property type="match status" value="1"/>
</dbReference>
<dbReference type="FunFam" id="3.40.50.300:FF:000427">
    <property type="entry name" value="Cytosolic Fe-S cluster assembly factor NUBP1"/>
    <property type="match status" value="1"/>
</dbReference>
<dbReference type="Gene3D" id="3.40.50.300">
    <property type="entry name" value="P-loop containing nucleotide triphosphate hydrolases"/>
    <property type="match status" value="1"/>
</dbReference>
<dbReference type="HAMAP" id="MF_02040">
    <property type="entry name" value="Mrp_NBP35"/>
    <property type="match status" value="1"/>
</dbReference>
<dbReference type="HAMAP" id="MF_03038">
    <property type="entry name" value="NUBP1"/>
    <property type="match status" value="1"/>
</dbReference>
<dbReference type="InterPro" id="IPR000808">
    <property type="entry name" value="Mrp-like_CS"/>
</dbReference>
<dbReference type="InterPro" id="IPR019591">
    <property type="entry name" value="Mrp/NBP35_ATP-bd"/>
</dbReference>
<dbReference type="InterPro" id="IPR028601">
    <property type="entry name" value="NUBP1/Nbp35"/>
</dbReference>
<dbReference type="InterPro" id="IPR027417">
    <property type="entry name" value="P-loop_NTPase"/>
</dbReference>
<dbReference type="InterPro" id="IPR033756">
    <property type="entry name" value="YlxH/NBP35"/>
</dbReference>
<dbReference type="PANTHER" id="PTHR23264:SF35">
    <property type="entry name" value="CYTOSOLIC FE-S CLUSTER ASSEMBLY FACTOR NUBP1"/>
    <property type="match status" value="1"/>
</dbReference>
<dbReference type="PANTHER" id="PTHR23264">
    <property type="entry name" value="NUCLEOTIDE-BINDING PROTEIN NBP35 YEAST -RELATED"/>
    <property type="match status" value="1"/>
</dbReference>
<dbReference type="Pfam" id="PF10609">
    <property type="entry name" value="ParA"/>
    <property type="match status" value="1"/>
</dbReference>
<dbReference type="SUPFAM" id="SSF52540">
    <property type="entry name" value="P-loop containing nucleoside triphosphate hydrolases"/>
    <property type="match status" value="1"/>
</dbReference>
<dbReference type="PROSITE" id="PS01215">
    <property type="entry name" value="MRP"/>
    <property type="match status" value="1"/>
</dbReference>
<protein>
    <recommendedName>
        <fullName evidence="1">Cytosolic Fe-S cluster assembly factor nbp35</fullName>
    </recommendedName>
    <alternativeName>
        <fullName evidence="1">Nucleotide-binding protein 35</fullName>
    </alternativeName>
</protein>
<reference key="1">
    <citation type="journal article" date="2005" name="Nature">
        <title>Genomic sequence of the pathogenic and allergenic filamentous fungus Aspergillus fumigatus.</title>
        <authorList>
            <person name="Nierman W.C."/>
            <person name="Pain A."/>
            <person name="Anderson M.J."/>
            <person name="Wortman J.R."/>
            <person name="Kim H.S."/>
            <person name="Arroyo J."/>
            <person name="Berriman M."/>
            <person name="Abe K."/>
            <person name="Archer D.B."/>
            <person name="Bermejo C."/>
            <person name="Bennett J.W."/>
            <person name="Bowyer P."/>
            <person name="Chen D."/>
            <person name="Collins M."/>
            <person name="Coulsen R."/>
            <person name="Davies R."/>
            <person name="Dyer P.S."/>
            <person name="Farman M.L."/>
            <person name="Fedorova N."/>
            <person name="Fedorova N.D."/>
            <person name="Feldblyum T.V."/>
            <person name="Fischer R."/>
            <person name="Fosker N."/>
            <person name="Fraser A."/>
            <person name="Garcia J.L."/>
            <person name="Garcia M.J."/>
            <person name="Goble A."/>
            <person name="Goldman G.H."/>
            <person name="Gomi K."/>
            <person name="Griffith-Jones S."/>
            <person name="Gwilliam R."/>
            <person name="Haas B.J."/>
            <person name="Haas H."/>
            <person name="Harris D.E."/>
            <person name="Horiuchi H."/>
            <person name="Huang J."/>
            <person name="Humphray S."/>
            <person name="Jimenez J."/>
            <person name="Keller N."/>
            <person name="Khouri H."/>
            <person name="Kitamoto K."/>
            <person name="Kobayashi T."/>
            <person name="Konzack S."/>
            <person name="Kulkarni R."/>
            <person name="Kumagai T."/>
            <person name="Lafton A."/>
            <person name="Latge J.-P."/>
            <person name="Li W."/>
            <person name="Lord A."/>
            <person name="Lu C."/>
            <person name="Majoros W.H."/>
            <person name="May G.S."/>
            <person name="Miller B.L."/>
            <person name="Mohamoud Y."/>
            <person name="Molina M."/>
            <person name="Monod M."/>
            <person name="Mouyna I."/>
            <person name="Mulligan S."/>
            <person name="Murphy L.D."/>
            <person name="O'Neil S."/>
            <person name="Paulsen I."/>
            <person name="Penalva M.A."/>
            <person name="Pertea M."/>
            <person name="Price C."/>
            <person name="Pritchard B.L."/>
            <person name="Quail M.A."/>
            <person name="Rabbinowitsch E."/>
            <person name="Rawlins N."/>
            <person name="Rajandream M.A."/>
            <person name="Reichard U."/>
            <person name="Renauld H."/>
            <person name="Robson G.D."/>
            <person name="Rodriguez de Cordoba S."/>
            <person name="Rodriguez-Pena J.M."/>
            <person name="Ronning C.M."/>
            <person name="Rutter S."/>
            <person name="Salzberg S.L."/>
            <person name="Sanchez M."/>
            <person name="Sanchez-Ferrero J.C."/>
            <person name="Saunders D."/>
            <person name="Seeger K."/>
            <person name="Squares R."/>
            <person name="Squares S."/>
            <person name="Takeuchi M."/>
            <person name="Tekaia F."/>
            <person name="Turner G."/>
            <person name="Vazquez de Aldana C.R."/>
            <person name="Weidman J."/>
            <person name="White O."/>
            <person name="Woodward J.R."/>
            <person name="Yu J.-H."/>
            <person name="Fraser C.M."/>
            <person name="Galagan J.E."/>
            <person name="Asai K."/>
            <person name="Machida M."/>
            <person name="Hall N."/>
            <person name="Barrell B.G."/>
            <person name="Denning D.W."/>
        </authorList>
    </citation>
    <scope>NUCLEOTIDE SEQUENCE [LARGE SCALE GENOMIC DNA]</scope>
    <source>
        <strain>ATCC MYA-4609 / CBS 101355 / FGSC A1100 / Af293</strain>
    </source>
</reference>
<gene>
    <name type="primary">nbp35</name>
    <name type="ORF">AFUA_2G15960</name>
</gene>